<gene>
    <name type="primary">Apoc1</name>
</gene>
<proteinExistence type="inferred from homology"/>
<evidence type="ECO:0000250" key="1">
    <source>
        <dbReference type="UniProtKB" id="P02654"/>
    </source>
</evidence>
<evidence type="ECO:0000250" key="2">
    <source>
        <dbReference type="UniProtKB" id="P33047"/>
    </source>
</evidence>
<evidence type="ECO:0000250" key="3">
    <source>
        <dbReference type="UniProtKB" id="P86336"/>
    </source>
</evidence>
<evidence type="ECO:0000305" key="4"/>
<sequence length="88" mass="9861">MRLFIALPVLIVVVAMALEGPAPAQAAPDFSSAMESLPDKLKEFGNTLEDKARAAIEHIKQKEIMIKTRNWFSETLNKMKEKLKTTFA</sequence>
<protein>
    <recommendedName>
        <fullName>Apolipoprotein C-I</fullName>
        <shortName>Apo-CI</shortName>
        <shortName>ApoC-I</shortName>
    </recommendedName>
    <alternativeName>
        <fullName>Apolipoprotein C1</fullName>
    </alternativeName>
    <alternativeName>
        <fullName>Liver regeneration-related protein LRRG04</fullName>
    </alternativeName>
    <component>
        <recommendedName>
            <fullName>Truncated apolipoprotein C-I</fullName>
        </recommendedName>
    </component>
</protein>
<organism>
    <name type="scientific">Rattus norvegicus</name>
    <name type="common">Rat</name>
    <dbReference type="NCBI Taxonomy" id="10116"/>
    <lineage>
        <taxon>Eukaryota</taxon>
        <taxon>Metazoa</taxon>
        <taxon>Chordata</taxon>
        <taxon>Craniata</taxon>
        <taxon>Vertebrata</taxon>
        <taxon>Euteleostomi</taxon>
        <taxon>Mammalia</taxon>
        <taxon>Eutheria</taxon>
        <taxon>Euarchontoglires</taxon>
        <taxon>Glires</taxon>
        <taxon>Rodentia</taxon>
        <taxon>Myomorpha</taxon>
        <taxon>Muroidea</taxon>
        <taxon>Muridae</taxon>
        <taxon>Murinae</taxon>
        <taxon>Rattus</taxon>
    </lineage>
</organism>
<name>APOC1_RAT</name>
<accession>P19939</accession>
<accession>Q53ZD8</accession>
<dbReference type="EMBL" id="X15512">
    <property type="protein sequence ID" value="CAA33536.1"/>
    <property type="molecule type" value="mRNA"/>
</dbReference>
<dbReference type="EMBL" id="AY327505">
    <property type="protein sequence ID" value="AAP97737.1"/>
    <property type="molecule type" value="mRNA"/>
</dbReference>
<dbReference type="EMBL" id="BC098670">
    <property type="protein sequence ID" value="AAH98670.1"/>
    <property type="molecule type" value="mRNA"/>
</dbReference>
<dbReference type="PIR" id="S05307">
    <property type="entry name" value="S05307"/>
</dbReference>
<dbReference type="RefSeq" id="NP_001103466.1">
    <property type="nucleotide sequence ID" value="NM_001109996.1"/>
</dbReference>
<dbReference type="RefSeq" id="NP_036956.1">
    <property type="nucleotide sequence ID" value="NM_012824.2"/>
</dbReference>
<dbReference type="RefSeq" id="XP_017443603.1">
    <property type="nucleotide sequence ID" value="XM_017588114.1"/>
</dbReference>
<dbReference type="RefSeq" id="XP_017445495.1">
    <property type="nucleotide sequence ID" value="XM_017590006.1"/>
</dbReference>
<dbReference type="RefSeq" id="XP_063137700.1">
    <property type="nucleotide sequence ID" value="XM_063281630.1"/>
</dbReference>
<dbReference type="RefSeq" id="XP_063137701.1">
    <property type="nucleotide sequence ID" value="XM_063281631.1"/>
</dbReference>
<dbReference type="RefSeq" id="XP_063137702.1">
    <property type="nucleotide sequence ID" value="XM_063281632.1"/>
</dbReference>
<dbReference type="SMR" id="P19939"/>
<dbReference type="FunCoup" id="P19939">
    <property type="interactions" value="7"/>
</dbReference>
<dbReference type="IntAct" id="P19939">
    <property type="interactions" value="1"/>
</dbReference>
<dbReference type="STRING" id="10116.ENSRNOP00000068542"/>
<dbReference type="iPTMnet" id="P19939"/>
<dbReference type="PhosphoSitePlus" id="P19939"/>
<dbReference type="PaxDb" id="10116-ENSRNOP00000040585"/>
<dbReference type="GeneID" id="25292"/>
<dbReference type="KEGG" id="rno:25292"/>
<dbReference type="UCSC" id="RGD:2134">
    <property type="organism name" value="rat"/>
</dbReference>
<dbReference type="AGR" id="RGD:2134"/>
<dbReference type="CTD" id="341"/>
<dbReference type="RGD" id="2134">
    <property type="gene designation" value="Apoc1"/>
</dbReference>
<dbReference type="VEuPathDB" id="HostDB:ENSRNOG00000018426"/>
<dbReference type="eggNOG" id="ENOG502SEU4">
    <property type="taxonomic scope" value="Eukaryota"/>
</dbReference>
<dbReference type="HOGENOM" id="CLU_160094_1_0_1"/>
<dbReference type="InParanoid" id="P19939"/>
<dbReference type="OrthoDB" id="84923at9989"/>
<dbReference type="PhylomeDB" id="P19939"/>
<dbReference type="TreeFam" id="TF330940"/>
<dbReference type="Reactome" id="R-RNO-8866423">
    <property type="pathway name" value="VLDL assembly"/>
</dbReference>
<dbReference type="Reactome" id="R-RNO-8964046">
    <property type="pathway name" value="VLDL clearance"/>
</dbReference>
<dbReference type="PRO" id="PR:P19939"/>
<dbReference type="Proteomes" id="UP000002494">
    <property type="component" value="Chromosome 1"/>
</dbReference>
<dbReference type="Bgee" id="ENSRNOG00000018426">
    <property type="expression patterns" value="Expressed in liver and 18 other cell types or tissues"/>
</dbReference>
<dbReference type="GO" id="GO:0034364">
    <property type="term" value="C:high-density lipoprotein particle"/>
    <property type="evidence" value="ECO:0000314"/>
    <property type="project" value="RGD"/>
</dbReference>
<dbReference type="GO" id="GO:0034361">
    <property type="term" value="C:very-low-density lipoprotein particle"/>
    <property type="evidence" value="ECO:0000314"/>
    <property type="project" value="RGD"/>
</dbReference>
<dbReference type="GO" id="GO:0005504">
    <property type="term" value="F:fatty acid binding"/>
    <property type="evidence" value="ECO:0000266"/>
    <property type="project" value="RGD"/>
</dbReference>
<dbReference type="GO" id="GO:0055102">
    <property type="term" value="F:lipase inhibitor activity"/>
    <property type="evidence" value="ECO:0000266"/>
    <property type="project" value="RGD"/>
</dbReference>
<dbReference type="GO" id="GO:0004859">
    <property type="term" value="F:phospholipase inhibitor activity"/>
    <property type="evidence" value="ECO:0000266"/>
    <property type="project" value="RGD"/>
</dbReference>
<dbReference type="GO" id="GO:0033344">
    <property type="term" value="P:cholesterol efflux"/>
    <property type="evidence" value="ECO:0000266"/>
    <property type="project" value="RGD"/>
</dbReference>
<dbReference type="GO" id="GO:0008203">
    <property type="term" value="P:cholesterol metabolic process"/>
    <property type="evidence" value="ECO:0000266"/>
    <property type="project" value="RGD"/>
</dbReference>
<dbReference type="GO" id="GO:0034382">
    <property type="term" value="P:chylomicron remnant clearance"/>
    <property type="evidence" value="ECO:0000266"/>
    <property type="project" value="RGD"/>
</dbReference>
<dbReference type="GO" id="GO:0042157">
    <property type="term" value="P:lipoprotein metabolic process"/>
    <property type="evidence" value="ECO:0000304"/>
    <property type="project" value="RGD"/>
</dbReference>
<dbReference type="GO" id="GO:0032375">
    <property type="term" value="P:negative regulation of cholesterol transport"/>
    <property type="evidence" value="ECO:0000266"/>
    <property type="project" value="RGD"/>
</dbReference>
<dbReference type="GO" id="GO:0045717">
    <property type="term" value="P:negative regulation of fatty acid biosynthetic process"/>
    <property type="evidence" value="ECO:0000266"/>
    <property type="project" value="RGD"/>
</dbReference>
<dbReference type="GO" id="GO:0050995">
    <property type="term" value="P:negative regulation of lipid catabolic process"/>
    <property type="evidence" value="ECO:0000266"/>
    <property type="project" value="RGD"/>
</dbReference>
<dbReference type="GO" id="GO:0045833">
    <property type="term" value="P:negative regulation of lipid metabolic process"/>
    <property type="evidence" value="ECO:0000266"/>
    <property type="project" value="RGD"/>
</dbReference>
<dbReference type="GO" id="GO:0010900">
    <property type="term" value="P:negative regulation of phosphatidylcholine catabolic process"/>
    <property type="evidence" value="ECO:0000266"/>
    <property type="project" value="RGD"/>
</dbReference>
<dbReference type="GO" id="GO:0048261">
    <property type="term" value="P:negative regulation of receptor-mediated endocytosis"/>
    <property type="evidence" value="ECO:0000266"/>
    <property type="project" value="RGD"/>
</dbReference>
<dbReference type="GO" id="GO:0010916">
    <property type="term" value="P:negative regulation of very-low-density lipoprotein particle clearance"/>
    <property type="evidence" value="ECO:0000266"/>
    <property type="project" value="RGD"/>
</dbReference>
<dbReference type="GO" id="GO:0033700">
    <property type="term" value="P:phospholipid efflux"/>
    <property type="evidence" value="ECO:0000266"/>
    <property type="project" value="RGD"/>
</dbReference>
<dbReference type="GO" id="GO:0034369">
    <property type="term" value="P:plasma lipoprotein particle remodeling"/>
    <property type="evidence" value="ECO:0000266"/>
    <property type="project" value="RGD"/>
</dbReference>
<dbReference type="GO" id="GO:0032368">
    <property type="term" value="P:regulation of lipid transport"/>
    <property type="evidence" value="ECO:0000314"/>
    <property type="project" value="RGD"/>
</dbReference>
<dbReference type="GO" id="GO:0006641">
    <property type="term" value="P:triglyceride metabolic process"/>
    <property type="evidence" value="ECO:0000266"/>
    <property type="project" value="RGD"/>
</dbReference>
<dbReference type="GO" id="GO:0034447">
    <property type="term" value="P:very-low-density lipoprotein particle clearance"/>
    <property type="evidence" value="ECO:0000266"/>
    <property type="project" value="RGD"/>
</dbReference>
<dbReference type="Gene3D" id="4.10.260.30">
    <property type="entry name" value="Apolipoprotein C-I"/>
    <property type="match status" value="1"/>
</dbReference>
<dbReference type="InterPro" id="IPR043081">
    <property type="entry name" value="ApoC-1_sf"/>
</dbReference>
<dbReference type="InterPro" id="IPR006781">
    <property type="entry name" value="ApoC-I"/>
</dbReference>
<dbReference type="PANTHER" id="PTHR16565">
    <property type="entry name" value="APOLIPOPROTEIN C-I"/>
    <property type="match status" value="1"/>
</dbReference>
<dbReference type="PANTHER" id="PTHR16565:SF2">
    <property type="entry name" value="APOLIPOPROTEIN C-I"/>
    <property type="match status" value="1"/>
</dbReference>
<dbReference type="Pfam" id="PF04691">
    <property type="entry name" value="ApoC-I"/>
    <property type="match status" value="1"/>
</dbReference>
<feature type="signal peptide">
    <location>
        <begin position="1"/>
        <end position="26"/>
    </location>
</feature>
<feature type="chain" id="PRO_0000002018" description="Apolipoprotein C-I">
    <location>
        <begin position="27"/>
        <end position="88"/>
    </location>
</feature>
<feature type="chain" id="PRO_0000391846" description="Truncated apolipoprotein C-I" evidence="3">
    <location>
        <begin position="29"/>
        <end position="88"/>
    </location>
</feature>
<reference key="1">
    <citation type="journal article" date="1989" name="Nucleic Acids Res.">
        <title>Nucleotide sequence of cDNA for rat apolipoprotein C-I.</title>
        <authorList>
            <person name="Shen P.Y."/>
            <person name="Howlett G.J."/>
        </authorList>
    </citation>
    <scope>NUCLEOTIDE SEQUENCE [MRNA]</scope>
</reference>
<reference key="2">
    <citation type="submission" date="2003-06" db="EMBL/GenBank/DDBJ databases">
        <title>Liver regeneration after PH.</title>
        <authorList>
            <person name="Xu C.S."/>
            <person name="Li W.Q."/>
            <person name="Li Y.C."/>
            <person name="Han H.P."/>
            <person name="Wang G.P."/>
            <person name="Chai L.Q."/>
            <person name="Yuan J.Y."/>
            <person name="Yang K.J."/>
            <person name="Yan H.M."/>
            <person name="Chang C.F."/>
            <person name="Zhao L.F."/>
            <person name="Ma H."/>
            <person name="Wang L."/>
            <person name="Wang S.F."/>
            <person name="Shi J.B."/>
            <person name="Rahman S."/>
            <person name="Wang Q.N."/>
            <person name="Zhang J.B."/>
        </authorList>
    </citation>
    <scope>NUCLEOTIDE SEQUENCE [LARGE SCALE MRNA]</scope>
    <source>
        <tissue>Liver</tissue>
    </source>
</reference>
<reference key="3">
    <citation type="journal article" date="2004" name="Genome Res.">
        <title>The status, quality, and expansion of the NIH full-length cDNA project: the Mammalian Gene Collection (MGC).</title>
        <authorList>
            <consortium name="The MGC Project Team"/>
        </authorList>
    </citation>
    <scope>NUCLEOTIDE SEQUENCE [LARGE SCALE MRNA]</scope>
    <source>
        <tissue>Liver</tissue>
    </source>
</reference>
<keyword id="KW-0445">Lipid transport</keyword>
<keyword id="KW-1185">Reference proteome</keyword>
<keyword id="KW-0964">Secreted</keyword>
<keyword id="KW-0732">Signal</keyword>
<keyword id="KW-0813">Transport</keyword>
<keyword id="KW-0850">VLDL</keyword>
<comment type="function">
    <text evidence="1 2">Inhibitor of lipoprotein binding to the low density lipoprotein (LDL) receptor, LDL receptor-related protein, and very low density lipoprotein (VLDL) receptor. Associates with high density lipoproteins (HDL) and the triacylglycerol-rich lipoproteins in the plasma and makes up about 10% of the protein of the VLDL and 2% of that of HDL. Appears to interfere directly with fatty acid uptake and is also the major plasma inhibitor of cholesteryl ester transfer protein (CETP). Binds free fatty acids and reduces their intracellular esterification. Modulates the interaction of APOE with beta-migrating VLDL and inhibits binding of beta-VLDL to the LDL receptor-related protein.</text>
</comment>
<comment type="subcellular location">
    <subcellularLocation>
        <location evidence="1">Secreted</location>
    </subcellularLocation>
</comment>
<comment type="similarity">
    <text evidence="4">Belongs to the apolipoprotein C1 family.</text>
</comment>